<dbReference type="EC" id="2.7.8.7" evidence="1"/>
<dbReference type="EMBL" id="CP000463">
    <property type="protein sequence ID" value="ABJ06961.1"/>
    <property type="molecule type" value="Genomic_DNA"/>
</dbReference>
<dbReference type="SMR" id="Q07M73"/>
<dbReference type="STRING" id="316055.RPE_3024"/>
<dbReference type="KEGG" id="rpe:RPE_3024"/>
<dbReference type="eggNOG" id="COG0736">
    <property type="taxonomic scope" value="Bacteria"/>
</dbReference>
<dbReference type="HOGENOM" id="CLU_089696_0_2_5"/>
<dbReference type="OrthoDB" id="517356at2"/>
<dbReference type="GO" id="GO:0005737">
    <property type="term" value="C:cytoplasm"/>
    <property type="evidence" value="ECO:0007669"/>
    <property type="project" value="UniProtKB-SubCell"/>
</dbReference>
<dbReference type="GO" id="GO:0008897">
    <property type="term" value="F:holo-[acyl-carrier-protein] synthase activity"/>
    <property type="evidence" value="ECO:0007669"/>
    <property type="project" value="UniProtKB-UniRule"/>
</dbReference>
<dbReference type="GO" id="GO:0000287">
    <property type="term" value="F:magnesium ion binding"/>
    <property type="evidence" value="ECO:0007669"/>
    <property type="project" value="UniProtKB-UniRule"/>
</dbReference>
<dbReference type="GO" id="GO:0006633">
    <property type="term" value="P:fatty acid biosynthetic process"/>
    <property type="evidence" value="ECO:0007669"/>
    <property type="project" value="UniProtKB-UniRule"/>
</dbReference>
<dbReference type="Gene3D" id="3.90.470.20">
    <property type="entry name" value="4'-phosphopantetheinyl transferase domain"/>
    <property type="match status" value="1"/>
</dbReference>
<dbReference type="HAMAP" id="MF_00101">
    <property type="entry name" value="AcpS"/>
    <property type="match status" value="1"/>
</dbReference>
<dbReference type="InterPro" id="IPR008278">
    <property type="entry name" value="4-PPantetheinyl_Trfase_dom"/>
</dbReference>
<dbReference type="InterPro" id="IPR037143">
    <property type="entry name" value="4-PPantetheinyl_Trfase_dom_sf"/>
</dbReference>
<dbReference type="InterPro" id="IPR002582">
    <property type="entry name" value="ACPS"/>
</dbReference>
<dbReference type="InterPro" id="IPR004568">
    <property type="entry name" value="Ppantetheine-prot_Trfase_dom"/>
</dbReference>
<dbReference type="NCBIfam" id="TIGR00516">
    <property type="entry name" value="acpS"/>
    <property type="match status" value="1"/>
</dbReference>
<dbReference type="NCBIfam" id="TIGR00556">
    <property type="entry name" value="pantethn_trn"/>
    <property type="match status" value="1"/>
</dbReference>
<dbReference type="Pfam" id="PF01648">
    <property type="entry name" value="ACPS"/>
    <property type="match status" value="1"/>
</dbReference>
<dbReference type="SUPFAM" id="SSF56214">
    <property type="entry name" value="4'-phosphopantetheinyl transferase"/>
    <property type="match status" value="1"/>
</dbReference>
<keyword id="KW-0963">Cytoplasm</keyword>
<keyword id="KW-0275">Fatty acid biosynthesis</keyword>
<keyword id="KW-0276">Fatty acid metabolism</keyword>
<keyword id="KW-0444">Lipid biosynthesis</keyword>
<keyword id="KW-0443">Lipid metabolism</keyword>
<keyword id="KW-0460">Magnesium</keyword>
<keyword id="KW-0479">Metal-binding</keyword>
<keyword id="KW-0808">Transferase</keyword>
<feature type="chain" id="PRO_1000008478" description="Holo-[acyl-carrier-protein] synthase">
    <location>
        <begin position="1"/>
        <end position="139"/>
    </location>
</feature>
<feature type="binding site" evidence="1">
    <location>
        <position position="8"/>
    </location>
    <ligand>
        <name>Mg(2+)</name>
        <dbReference type="ChEBI" id="CHEBI:18420"/>
    </ligand>
</feature>
<feature type="binding site" evidence="1">
    <location>
        <position position="61"/>
    </location>
    <ligand>
        <name>Mg(2+)</name>
        <dbReference type="ChEBI" id="CHEBI:18420"/>
    </ligand>
</feature>
<protein>
    <recommendedName>
        <fullName evidence="1">Holo-[acyl-carrier-protein] synthase</fullName>
        <shortName evidence="1">Holo-ACP synthase</shortName>
        <ecNumber evidence="1">2.7.8.7</ecNumber>
    </recommendedName>
    <alternativeName>
        <fullName evidence="1">4'-phosphopantetheinyl transferase AcpS</fullName>
    </alternativeName>
</protein>
<proteinExistence type="inferred from homology"/>
<sequence>MILGIGSDLIDIRRVAKVIERHGDRFLDRVFTPAERAKAQRRAANEKMVVATYAKRFAAKEACAKALGTGIRHGVWWRDMGVVNLPGGRPTMQLTGGAKARLESMTPPGHEARIDLSITDDWPLAQAFVIISADPPGRP</sequence>
<reference key="1">
    <citation type="submission" date="2006-09" db="EMBL/GenBank/DDBJ databases">
        <title>Complete sequence of Rhodopseudomonas palustris BisA53.</title>
        <authorList>
            <consortium name="US DOE Joint Genome Institute"/>
            <person name="Copeland A."/>
            <person name="Lucas S."/>
            <person name="Lapidus A."/>
            <person name="Barry K."/>
            <person name="Detter J.C."/>
            <person name="Glavina del Rio T."/>
            <person name="Hammon N."/>
            <person name="Israni S."/>
            <person name="Dalin E."/>
            <person name="Tice H."/>
            <person name="Pitluck S."/>
            <person name="Chain P."/>
            <person name="Malfatti S."/>
            <person name="Shin M."/>
            <person name="Vergez L."/>
            <person name="Schmutz J."/>
            <person name="Larimer F."/>
            <person name="Land M."/>
            <person name="Hauser L."/>
            <person name="Pelletier D.A."/>
            <person name="Kyrpides N."/>
            <person name="Kim E."/>
            <person name="Harwood C.S."/>
            <person name="Oda Y."/>
            <person name="Richardson P."/>
        </authorList>
    </citation>
    <scope>NUCLEOTIDE SEQUENCE [LARGE SCALE GENOMIC DNA]</scope>
    <source>
        <strain>BisA53</strain>
    </source>
</reference>
<organism>
    <name type="scientific">Rhodopseudomonas palustris (strain BisA53)</name>
    <dbReference type="NCBI Taxonomy" id="316055"/>
    <lineage>
        <taxon>Bacteria</taxon>
        <taxon>Pseudomonadati</taxon>
        <taxon>Pseudomonadota</taxon>
        <taxon>Alphaproteobacteria</taxon>
        <taxon>Hyphomicrobiales</taxon>
        <taxon>Nitrobacteraceae</taxon>
        <taxon>Rhodopseudomonas</taxon>
    </lineage>
</organism>
<evidence type="ECO:0000255" key="1">
    <source>
        <dbReference type="HAMAP-Rule" id="MF_00101"/>
    </source>
</evidence>
<comment type="function">
    <text evidence="1">Transfers the 4'-phosphopantetheine moiety from coenzyme A to a Ser of acyl-carrier-protein.</text>
</comment>
<comment type="catalytic activity">
    <reaction evidence="1">
        <text>apo-[ACP] + CoA = holo-[ACP] + adenosine 3',5'-bisphosphate + H(+)</text>
        <dbReference type="Rhea" id="RHEA:12068"/>
        <dbReference type="Rhea" id="RHEA-COMP:9685"/>
        <dbReference type="Rhea" id="RHEA-COMP:9690"/>
        <dbReference type="ChEBI" id="CHEBI:15378"/>
        <dbReference type="ChEBI" id="CHEBI:29999"/>
        <dbReference type="ChEBI" id="CHEBI:57287"/>
        <dbReference type="ChEBI" id="CHEBI:58343"/>
        <dbReference type="ChEBI" id="CHEBI:64479"/>
        <dbReference type="EC" id="2.7.8.7"/>
    </reaction>
</comment>
<comment type="cofactor">
    <cofactor evidence="1">
        <name>Mg(2+)</name>
        <dbReference type="ChEBI" id="CHEBI:18420"/>
    </cofactor>
</comment>
<comment type="subcellular location">
    <subcellularLocation>
        <location evidence="1">Cytoplasm</location>
    </subcellularLocation>
</comment>
<comment type="similarity">
    <text evidence="1">Belongs to the P-Pant transferase superfamily. AcpS family.</text>
</comment>
<accession>Q07M73</accession>
<name>ACPS_RHOP5</name>
<gene>
    <name evidence="1" type="primary">acpS</name>
    <name type="ordered locus">RPE_3024</name>
</gene>